<evidence type="ECO:0000255" key="1">
    <source>
        <dbReference type="HAMAP-Rule" id="MF_00920"/>
    </source>
</evidence>
<organism>
    <name type="scientific">Mycoplasma genitalium (strain ATCC 33530 / DSM 19775 / NCTC 10195 / G37)</name>
    <name type="common">Mycoplasmoides genitalium</name>
    <dbReference type="NCBI Taxonomy" id="243273"/>
    <lineage>
        <taxon>Bacteria</taxon>
        <taxon>Bacillati</taxon>
        <taxon>Mycoplasmatota</taxon>
        <taxon>Mycoplasmoidales</taxon>
        <taxon>Mycoplasmoidaceae</taxon>
        <taxon>Mycoplasmoides</taxon>
    </lineage>
</organism>
<feature type="chain" id="PRO_0000101135" description="Signal recognition particle receptor FtsY">
    <location>
        <begin position="1"/>
        <end position="346"/>
    </location>
</feature>
<feature type="binding site" evidence="1">
    <location>
        <begin position="143"/>
        <end position="150"/>
    </location>
    <ligand>
        <name>GTP</name>
        <dbReference type="ChEBI" id="CHEBI:37565"/>
    </ligand>
</feature>
<feature type="binding site" evidence="1">
    <location>
        <begin position="225"/>
        <end position="229"/>
    </location>
    <ligand>
        <name>GTP</name>
        <dbReference type="ChEBI" id="CHEBI:37565"/>
    </ligand>
</feature>
<feature type="binding site" evidence="1">
    <location>
        <begin position="289"/>
        <end position="292"/>
    </location>
    <ligand>
        <name>GTP</name>
        <dbReference type="ChEBI" id="CHEBI:37565"/>
    </ligand>
</feature>
<accession>P47539</accession>
<keyword id="KW-1003">Cell membrane</keyword>
<keyword id="KW-0963">Cytoplasm</keyword>
<keyword id="KW-0342">GTP-binding</keyword>
<keyword id="KW-0378">Hydrolase</keyword>
<keyword id="KW-0472">Membrane</keyword>
<keyword id="KW-0547">Nucleotide-binding</keyword>
<keyword id="KW-0675">Receptor</keyword>
<keyword id="KW-1185">Reference proteome</keyword>
<dbReference type="EC" id="3.6.5.4" evidence="1"/>
<dbReference type="EMBL" id="L43967">
    <property type="protein sequence ID" value="AAC71519.1"/>
    <property type="molecule type" value="Genomic_DNA"/>
</dbReference>
<dbReference type="EMBL" id="U02177">
    <property type="protein sequence ID" value="AAD12462.1"/>
    <property type="molecule type" value="Genomic_DNA"/>
</dbReference>
<dbReference type="PIR" id="H64232">
    <property type="entry name" value="H64232"/>
</dbReference>
<dbReference type="RefSeq" id="WP_009885877.1">
    <property type="nucleotide sequence ID" value="NC_000908.2"/>
</dbReference>
<dbReference type="SMR" id="P47539"/>
<dbReference type="FunCoup" id="P47539">
    <property type="interactions" value="184"/>
</dbReference>
<dbReference type="STRING" id="243273.MG_297"/>
<dbReference type="GeneID" id="88282460"/>
<dbReference type="KEGG" id="mge:MG_297"/>
<dbReference type="eggNOG" id="COG0552">
    <property type="taxonomic scope" value="Bacteria"/>
</dbReference>
<dbReference type="HOGENOM" id="CLU_009301_3_0_14"/>
<dbReference type="InParanoid" id="P47539"/>
<dbReference type="OrthoDB" id="9804720at2"/>
<dbReference type="BioCyc" id="MGEN243273:G1GJ2-366-MONOMER"/>
<dbReference type="Proteomes" id="UP000000807">
    <property type="component" value="Chromosome"/>
</dbReference>
<dbReference type="GO" id="GO:0005737">
    <property type="term" value="C:cytoplasm"/>
    <property type="evidence" value="ECO:0007669"/>
    <property type="project" value="UniProtKB-SubCell"/>
</dbReference>
<dbReference type="GO" id="GO:0005886">
    <property type="term" value="C:plasma membrane"/>
    <property type="evidence" value="ECO:0000318"/>
    <property type="project" value="GO_Central"/>
</dbReference>
<dbReference type="GO" id="GO:0016887">
    <property type="term" value="F:ATP hydrolysis activity"/>
    <property type="evidence" value="ECO:0007669"/>
    <property type="project" value="InterPro"/>
</dbReference>
<dbReference type="GO" id="GO:0005525">
    <property type="term" value="F:GTP binding"/>
    <property type="evidence" value="ECO:0007669"/>
    <property type="project" value="UniProtKB-UniRule"/>
</dbReference>
<dbReference type="GO" id="GO:0003924">
    <property type="term" value="F:GTPase activity"/>
    <property type="evidence" value="ECO:0000318"/>
    <property type="project" value="GO_Central"/>
</dbReference>
<dbReference type="GO" id="GO:0005047">
    <property type="term" value="F:signal recognition particle binding"/>
    <property type="evidence" value="ECO:0000318"/>
    <property type="project" value="GO_Central"/>
</dbReference>
<dbReference type="GO" id="GO:0006605">
    <property type="term" value="P:protein targeting"/>
    <property type="evidence" value="ECO:0000318"/>
    <property type="project" value="GO_Central"/>
</dbReference>
<dbReference type="GO" id="GO:0006614">
    <property type="term" value="P:SRP-dependent cotranslational protein targeting to membrane"/>
    <property type="evidence" value="ECO:0007669"/>
    <property type="project" value="InterPro"/>
</dbReference>
<dbReference type="FunFam" id="3.40.50.300:FF:000053">
    <property type="entry name" value="Signal recognition particle receptor FtsY"/>
    <property type="match status" value="1"/>
</dbReference>
<dbReference type="Gene3D" id="3.40.50.300">
    <property type="entry name" value="P-loop containing nucleotide triphosphate hydrolases"/>
    <property type="match status" value="1"/>
</dbReference>
<dbReference type="Gene3D" id="1.20.120.140">
    <property type="entry name" value="Signal recognition particle SRP54, nucleotide-binding domain"/>
    <property type="match status" value="1"/>
</dbReference>
<dbReference type="HAMAP" id="MF_00920">
    <property type="entry name" value="FtsY"/>
    <property type="match status" value="1"/>
</dbReference>
<dbReference type="InterPro" id="IPR003593">
    <property type="entry name" value="AAA+_ATPase"/>
</dbReference>
<dbReference type="InterPro" id="IPR027417">
    <property type="entry name" value="P-loop_NTPase"/>
</dbReference>
<dbReference type="InterPro" id="IPR013822">
    <property type="entry name" value="Signal_recog_particl_SRP54_hlx"/>
</dbReference>
<dbReference type="InterPro" id="IPR004390">
    <property type="entry name" value="SR_rcpt_FtsY"/>
</dbReference>
<dbReference type="InterPro" id="IPR036225">
    <property type="entry name" value="SRP/SRP_N"/>
</dbReference>
<dbReference type="InterPro" id="IPR000897">
    <property type="entry name" value="SRP54_GTPase_dom"/>
</dbReference>
<dbReference type="InterPro" id="IPR042101">
    <property type="entry name" value="SRP54_N_sf"/>
</dbReference>
<dbReference type="NCBIfam" id="TIGR00064">
    <property type="entry name" value="ftsY"/>
    <property type="match status" value="1"/>
</dbReference>
<dbReference type="PANTHER" id="PTHR43134">
    <property type="entry name" value="SIGNAL RECOGNITION PARTICLE RECEPTOR SUBUNIT ALPHA"/>
    <property type="match status" value="1"/>
</dbReference>
<dbReference type="PANTHER" id="PTHR43134:SF1">
    <property type="entry name" value="SIGNAL RECOGNITION PARTICLE RECEPTOR SUBUNIT ALPHA"/>
    <property type="match status" value="1"/>
</dbReference>
<dbReference type="Pfam" id="PF00448">
    <property type="entry name" value="SRP54"/>
    <property type="match status" value="1"/>
</dbReference>
<dbReference type="Pfam" id="PF02881">
    <property type="entry name" value="SRP54_N"/>
    <property type="match status" value="1"/>
</dbReference>
<dbReference type="SMART" id="SM00382">
    <property type="entry name" value="AAA"/>
    <property type="match status" value="1"/>
</dbReference>
<dbReference type="SMART" id="SM00962">
    <property type="entry name" value="SRP54"/>
    <property type="match status" value="1"/>
</dbReference>
<dbReference type="SMART" id="SM00963">
    <property type="entry name" value="SRP54_N"/>
    <property type="match status" value="1"/>
</dbReference>
<dbReference type="SUPFAM" id="SSF47364">
    <property type="entry name" value="Domain of the SRP/SRP receptor G-proteins"/>
    <property type="match status" value="1"/>
</dbReference>
<dbReference type="SUPFAM" id="SSF52540">
    <property type="entry name" value="P-loop containing nucleoside triphosphate hydrolases"/>
    <property type="match status" value="1"/>
</dbReference>
<dbReference type="PROSITE" id="PS00300">
    <property type="entry name" value="SRP54"/>
    <property type="match status" value="1"/>
</dbReference>
<sequence length="346" mass="38859">MGFLSKLIAKLKPKKSVAKQLKEEVEKQSLFQTNNKTYYQGLKKSATTFAKTINELSKRYVNVDEQFKENLFEGLVLLDVGYHAANKICDAIIEQIKLNRITDFQLIKELIIDQIIVYYIQDKLFDTDLIVKPNFTNVYLFVGVNGVGKTTTLAKIADFFIKQNKRVLLVAGDTFRAGAIEQLNQWAKLLNCDIVLPNPKEQTPAVIFRGVKKGIDDKYDFVLCDTSGRLQNKLNLMNELQKIYQIIQKVSGSEPSETLLVLDGTVGQTGLSQAKVFNEFSKLTGIVLTKMDGSAKGGIILAIKDMFNLPVKLIGFGEKTSDLAIFDLEKYVLGLLNNLNLDNKEN</sequence>
<protein>
    <recommendedName>
        <fullName evidence="1">Signal recognition particle receptor FtsY</fullName>
        <shortName evidence="1">SRP receptor</shortName>
        <ecNumber evidence="1">3.6.5.4</ecNumber>
    </recommendedName>
</protein>
<reference key="1">
    <citation type="journal article" date="1995" name="Science">
        <title>The minimal gene complement of Mycoplasma genitalium.</title>
        <authorList>
            <person name="Fraser C.M."/>
            <person name="Gocayne J.D."/>
            <person name="White O."/>
            <person name="Adams M.D."/>
            <person name="Clayton R.A."/>
            <person name="Fleischmann R.D."/>
            <person name="Bult C.J."/>
            <person name="Kerlavage A.R."/>
            <person name="Sutton G.G."/>
            <person name="Kelley J.M."/>
            <person name="Fritchman J.L."/>
            <person name="Weidman J.F."/>
            <person name="Small K.V."/>
            <person name="Sandusky M."/>
            <person name="Fuhrmann J.L."/>
            <person name="Nguyen D.T."/>
            <person name="Utterback T.R."/>
            <person name="Saudek D.M."/>
            <person name="Phillips C.A."/>
            <person name="Merrick J.M."/>
            <person name="Tomb J.-F."/>
            <person name="Dougherty B.A."/>
            <person name="Bott K.F."/>
            <person name="Hu P.-C."/>
            <person name="Lucier T.S."/>
            <person name="Peterson S.N."/>
            <person name="Smith H.O."/>
            <person name="Hutchison C.A. III"/>
            <person name="Venter J.C."/>
        </authorList>
    </citation>
    <scope>NUCLEOTIDE SEQUENCE [LARGE SCALE GENOMIC DNA]</scope>
    <source>
        <strain>ATCC 33530 / DSM 19775 / NCTC 10195 / G37</strain>
    </source>
</reference>
<reference key="2">
    <citation type="journal article" date="1993" name="J. Bacteriol.">
        <title>A survey of the Mycoplasma genitalium genome by using random sequencing.</title>
        <authorList>
            <person name="Peterson S.N."/>
            <person name="Hu P.-C."/>
            <person name="Bott K.F."/>
            <person name="Hutchison C.A. III"/>
        </authorList>
    </citation>
    <scope>NUCLEOTIDE SEQUENCE [GENOMIC DNA] OF 1-19</scope>
    <source>
        <strain>ATCC 33530 / DSM 19775 / NCTC 10195 / G37</strain>
    </source>
</reference>
<name>FTSY_MYCGE</name>
<comment type="function">
    <text evidence="1">Involved in targeting and insertion of nascent membrane proteins into the cytoplasmic membrane. Acts as a receptor for the complex formed by the signal recognition particle (SRP) and the ribosome-nascent chain (RNC).</text>
</comment>
<comment type="catalytic activity">
    <reaction evidence="1">
        <text>GTP + H2O = GDP + phosphate + H(+)</text>
        <dbReference type="Rhea" id="RHEA:19669"/>
        <dbReference type="ChEBI" id="CHEBI:15377"/>
        <dbReference type="ChEBI" id="CHEBI:15378"/>
        <dbReference type="ChEBI" id="CHEBI:37565"/>
        <dbReference type="ChEBI" id="CHEBI:43474"/>
        <dbReference type="ChEBI" id="CHEBI:58189"/>
        <dbReference type="EC" id="3.6.5.4"/>
    </reaction>
</comment>
<comment type="subunit">
    <text evidence="1">Part of the signal recognition particle protein translocation system, which is composed of SRP and FtsY.</text>
</comment>
<comment type="subcellular location">
    <subcellularLocation>
        <location>Cell membrane</location>
        <topology>Peripheral membrane protein</topology>
        <orientation>Cytoplasmic side</orientation>
    </subcellularLocation>
    <subcellularLocation>
        <location evidence="1">Cytoplasm</location>
    </subcellularLocation>
</comment>
<comment type="similarity">
    <text evidence="1">Belongs to the GTP-binding SRP family. FtsY subfamily.</text>
</comment>
<gene>
    <name evidence="1" type="primary">ftsY</name>
    <name type="ordered locus">MG297</name>
</gene>
<proteinExistence type="inferred from homology"/>